<organism>
    <name type="scientific">Escherichia coli O9:H4 (strain HS)</name>
    <dbReference type="NCBI Taxonomy" id="331112"/>
    <lineage>
        <taxon>Bacteria</taxon>
        <taxon>Pseudomonadati</taxon>
        <taxon>Pseudomonadota</taxon>
        <taxon>Gammaproteobacteria</taxon>
        <taxon>Enterobacterales</taxon>
        <taxon>Enterobacteriaceae</taxon>
        <taxon>Escherichia</taxon>
    </lineage>
</organism>
<reference key="1">
    <citation type="journal article" date="2008" name="J. Bacteriol.">
        <title>The pangenome structure of Escherichia coli: comparative genomic analysis of E. coli commensal and pathogenic isolates.</title>
        <authorList>
            <person name="Rasko D.A."/>
            <person name="Rosovitz M.J."/>
            <person name="Myers G.S.A."/>
            <person name="Mongodin E.F."/>
            <person name="Fricke W.F."/>
            <person name="Gajer P."/>
            <person name="Crabtree J."/>
            <person name="Sebaihia M."/>
            <person name="Thomson N.R."/>
            <person name="Chaudhuri R."/>
            <person name="Henderson I.R."/>
            <person name="Sperandio V."/>
            <person name="Ravel J."/>
        </authorList>
    </citation>
    <scope>NUCLEOTIDE SEQUENCE [LARGE SCALE GENOMIC DNA]</scope>
    <source>
        <strain>HS</strain>
    </source>
</reference>
<proteinExistence type="inferred from homology"/>
<dbReference type="EC" id="5.4.99.12" evidence="1"/>
<dbReference type="EMBL" id="CP000802">
    <property type="protein sequence ID" value="ABV06741.1"/>
    <property type="molecule type" value="Genomic_DNA"/>
</dbReference>
<dbReference type="RefSeq" id="WP_001283585.1">
    <property type="nucleotide sequence ID" value="NC_009800.1"/>
</dbReference>
<dbReference type="SMR" id="A8A2I7"/>
<dbReference type="KEGG" id="ecx:EcHS_A2469"/>
<dbReference type="HOGENOM" id="CLU_014673_0_2_6"/>
<dbReference type="GO" id="GO:0003723">
    <property type="term" value="F:RNA binding"/>
    <property type="evidence" value="ECO:0007669"/>
    <property type="project" value="InterPro"/>
</dbReference>
<dbReference type="GO" id="GO:0160147">
    <property type="term" value="F:tRNA pseudouridine(38-40) synthase activity"/>
    <property type="evidence" value="ECO:0007669"/>
    <property type="project" value="UniProtKB-EC"/>
</dbReference>
<dbReference type="GO" id="GO:0031119">
    <property type="term" value="P:tRNA pseudouridine synthesis"/>
    <property type="evidence" value="ECO:0007669"/>
    <property type="project" value="UniProtKB-UniRule"/>
</dbReference>
<dbReference type="CDD" id="cd02570">
    <property type="entry name" value="PseudoU_synth_EcTruA"/>
    <property type="match status" value="1"/>
</dbReference>
<dbReference type="FunFam" id="3.30.70.580:FF:000001">
    <property type="entry name" value="tRNA pseudouridine synthase A"/>
    <property type="match status" value="1"/>
</dbReference>
<dbReference type="FunFam" id="3.30.70.660:FF:000001">
    <property type="entry name" value="tRNA pseudouridine synthase A"/>
    <property type="match status" value="1"/>
</dbReference>
<dbReference type="Gene3D" id="3.30.70.660">
    <property type="entry name" value="Pseudouridine synthase I, catalytic domain, C-terminal subdomain"/>
    <property type="match status" value="1"/>
</dbReference>
<dbReference type="Gene3D" id="3.30.70.580">
    <property type="entry name" value="Pseudouridine synthase I, catalytic domain, N-terminal subdomain"/>
    <property type="match status" value="1"/>
</dbReference>
<dbReference type="HAMAP" id="MF_00171">
    <property type="entry name" value="TruA"/>
    <property type="match status" value="1"/>
</dbReference>
<dbReference type="InterPro" id="IPR020103">
    <property type="entry name" value="PsdUridine_synth_cat_dom_sf"/>
</dbReference>
<dbReference type="InterPro" id="IPR001406">
    <property type="entry name" value="PsdUridine_synth_TruA"/>
</dbReference>
<dbReference type="InterPro" id="IPR020097">
    <property type="entry name" value="PsdUridine_synth_TruA_a/b_dom"/>
</dbReference>
<dbReference type="InterPro" id="IPR020095">
    <property type="entry name" value="PsdUridine_synth_TruA_C"/>
</dbReference>
<dbReference type="InterPro" id="IPR020094">
    <property type="entry name" value="TruA/RsuA/RluB/E/F_N"/>
</dbReference>
<dbReference type="NCBIfam" id="TIGR00071">
    <property type="entry name" value="hisT_truA"/>
    <property type="match status" value="1"/>
</dbReference>
<dbReference type="PANTHER" id="PTHR11142">
    <property type="entry name" value="PSEUDOURIDYLATE SYNTHASE"/>
    <property type="match status" value="1"/>
</dbReference>
<dbReference type="PANTHER" id="PTHR11142:SF0">
    <property type="entry name" value="TRNA PSEUDOURIDINE SYNTHASE-LIKE 1"/>
    <property type="match status" value="1"/>
</dbReference>
<dbReference type="Pfam" id="PF01416">
    <property type="entry name" value="PseudoU_synth_1"/>
    <property type="match status" value="2"/>
</dbReference>
<dbReference type="PIRSF" id="PIRSF001430">
    <property type="entry name" value="tRNA_psdUrid_synth"/>
    <property type="match status" value="1"/>
</dbReference>
<dbReference type="SUPFAM" id="SSF55120">
    <property type="entry name" value="Pseudouridine synthase"/>
    <property type="match status" value="1"/>
</dbReference>
<keyword id="KW-0413">Isomerase</keyword>
<keyword id="KW-0819">tRNA processing</keyword>
<gene>
    <name evidence="1" type="primary">truA</name>
    <name type="ordered locus">EcHS_A2469</name>
</gene>
<protein>
    <recommendedName>
        <fullName evidence="1">tRNA pseudouridine synthase A</fullName>
        <ecNumber evidence="1">5.4.99.12</ecNumber>
    </recommendedName>
    <alternativeName>
        <fullName evidence="1">tRNA pseudouridine(38-40) synthase</fullName>
    </alternativeName>
    <alternativeName>
        <fullName evidence="1">tRNA pseudouridylate synthase I</fullName>
    </alternativeName>
    <alternativeName>
        <fullName evidence="1">tRNA-uridine isomerase I</fullName>
    </alternativeName>
</protein>
<sequence>MSDQQQPPVYKIALGIEYDGSKYYGWQRQNEVRSVQEKLEKALSQVANEPITVFCAGRTDAGVHGTGQVVHFETTALRKDAAWTLGVNANLPGDIAVRWVKAVPDDFHARFSATARRYRYIIYNHRLRPAVLSKGVTHFYEPLDAERMHRAAQCLLGENDFTSFRAVQCQSRTPWRNVMHINVTRHGPYVVVDIKANAFVHHMVRNIVGSLMEVGAHNQPESWIAELLAAKDRTLAAATAKAEGLYLVAVDYPDRYDLPKPPMGPLFLAD</sequence>
<name>TRUA_ECOHS</name>
<evidence type="ECO:0000255" key="1">
    <source>
        <dbReference type="HAMAP-Rule" id="MF_00171"/>
    </source>
</evidence>
<accession>A8A2I7</accession>
<comment type="function">
    <text evidence="1">Formation of pseudouridine at positions 38, 39 and 40 in the anticodon stem and loop of transfer RNAs.</text>
</comment>
<comment type="catalytic activity">
    <reaction evidence="1">
        <text>uridine(38/39/40) in tRNA = pseudouridine(38/39/40) in tRNA</text>
        <dbReference type="Rhea" id="RHEA:22376"/>
        <dbReference type="Rhea" id="RHEA-COMP:10085"/>
        <dbReference type="Rhea" id="RHEA-COMP:10087"/>
        <dbReference type="ChEBI" id="CHEBI:65314"/>
        <dbReference type="ChEBI" id="CHEBI:65315"/>
        <dbReference type="EC" id="5.4.99.12"/>
    </reaction>
</comment>
<comment type="subunit">
    <text evidence="1">Homodimer.</text>
</comment>
<comment type="similarity">
    <text evidence="1">Belongs to the tRNA pseudouridine synthase TruA family.</text>
</comment>
<feature type="chain" id="PRO_1000058305" description="tRNA pseudouridine synthase A">
    <location>
        <begin position="1"/>
        <end position="270"/>
    </location>
</feature>
<feature type="region of interest" description="RNA binding" evidence="1">
    <location>
        <begin position="107"/>
        <end position="111"/>
    </location>
</feature>
<feature type="region of interest" description="Interaction with tRNA" evidence="1">
    <location>
        <begin position="168"/>
        <end position="172"/>
    </location>
</feature>
<feature type="active site" description="Nucleophile" evidence="1">
    <location>
        <position position="60"/>
    </location>
</feature>
<feature type="binding site" evidence="1">
    <location>
        <position position="118"/>
    </location>
    <ligand>
        <name>substrate</name>
    </ligand>
</feature>
<feature type="site" description="Interaction with tRNA; Important for base-flipping" evidence="1">
    <location>
        <position position="58"/>
    </location>
</feature>
<feature type="site" description="Interaction with tRNA" evidence="1">
    <location>
        <position position="78"/>
    </location>
</feature>
<feature type="site" description="Interaction with tRNA" evidence="1">
    <location>
        <position position="110"/>
    </location>
</feature>
<feature type="site" description="Interaction with tRNA" evidence="1">
    <location>
        <position position="126"/>
    </location>
</feature>
<feature type="site" description="Interaction with tRNA" evidence="1">
    <location>
        <position position="139"/>
    </location>
</feature>